<keyword id="KW-0963">Cytoplasm</keyword>
<keyword id="KW-0592">Phosphate transport</keyword>
<keyword id="KW-1185">Reference proteome</keyword>
<keyword id="KW-0813">Transport</keyword>
<dbReference type="EMBL" id="AE000666">
    <property type="protein sequence ID" value="AAB86204.1"/>
    <property type="molecule type" value="Genomic_DNA"/>
</dbReference>
<dbReference type="PIR" id="H69098">
    <property type="entry name" value="H69098"/>
</dbReference>
<dbReference type="SMR" id="O27767"/>
<dbReference type="FunCoup" id="O27767">
    <property type="interactions" value="3"/>
</dbReference>
<dbReference type="STRING" id="187420.MTH_1734"/>
<dbReference type="PaxDb" id="187420-MTH_1734"/>
<dbReference type="EnsemblBacteria" id="AAB86204">
    <property type="protein sequence ID" value="AAB86204"/>
    <property type="gene ID" value="MTH_1734"/>
</dbReference>
<dbReference type="KEGG" id="mth:MTH_1734"/>
<dbReference type="PATRIC" id="fig|187420.15.peg.1693"/>
<dbReference type="HOGENOM" id="CLU_078518_2_0_2"/>
<dbReference type="InParanoid" id="O27767"/>
<dbReference type="Proteomes" id="UP000005223">
    <property type="component" value="Chromosome"/>
</dbReference>
<dbReference type="GO" id="GO:0005737">
    <property type="term" value="C:cytoplasm"/>
    <property type="evidence" value="ECO:0000250"/>
    <property type="project" value="UniProtKB"/>
</dbReference>
<dbReference type="GO" id="GO:0042803">
    <property type="term" value="F:protein homodimerization activity"/>
    <property type="evidence" value="ECO:0000250"/>
    <property type="project" value="UniProtKB"/>
</dbReference>
<dbReference type="GO" id="GO:0030643">
    <property type="term" value="P:intracellular phosphate ion homeostasis"/>
    <property type="evidence" value="ECO:0007669"/>
    <property type="project" value="InterPro"/>
</dbReference>
<dbReference type="GO" id="GO:0045936">
    <property type="term" value="P:negative regulation of phosphate metabolic process"/>
    <property type="evidence" value="ECO:0000250"/>
    <property type="project" value="UniProtKB"/>
</dbReference>
<dbReference type="GO" id="GO:2000186">
    <property type="term" value="P:negative regulation of phosphate transmembrane transport"/>
    <property type="evidence" value="ECO:0000250"/>
    <property type="project" value="UniProtKB"/>
</dbReference>
<dbReference type="GO" id="GO:0006817">
    <property type="term" value="P:phosphate ion transport"/>
    <property type="evidence" value="ECO:0007669"/>
    <property type="project" value="UniProtKB-KW"/>
</dbReference>
<dbReference type="FunFam" id="1.20.58.220:FF:000004">
    <property type="entry name" value="Phosphate-specific transport system accessory protein PhoU"/>
    <property type="match status" value="1"/>
</dbReference>
<dbReference type="Gene3D" id="1.20.58.220">
    <property type="entry name" value="Phosphate transport system protein phou homolog 2, domain 2"/>
    <property type="match status" value="1"/>
</dbReference>
<dbReference type="InterPro" id="IPR028366">
    <property type="entry name" value="P_transport_PhoU"/>
</dbReference>
<dbReference type="InterPro" id="IPR038078">
    <property type="entry name" value="PhoU-like_sf"/>
</dbReference>
<dbReference type="InterPro" id="IPR026022">
    <property type="entry name" value="PhoU_dom"/>
</dbReference>
<dbReference type="NCBIfam" id="TIGR02135">
    <property type="entry name" value="phoU_full"/>
    <property type="match status" value="1"/>
</dbReference>
<dbReference type="PANTHER" id="PTHR42930">
    <property type="entry name" value="PHOSPHATE-SPECIFIC TRANSPORT SYSTEM ACCESSORY PROTEIN PHOU"/>
    <property type="match status" value="1"/>
</dbReference>
<dbReference type="PANTHER" id="PTHR42930:SF3">
    <property type="entry name" value="PHOSPHATE-SPECIFIC TRANSPORT SYSTEM ACCESSORY PROTEIN PHOU"/>
    <property type="match status" value="1"/>
</dbReference>
<dbReference type="Pfam" id="PF01895">
    <property type="entry name" value="PhoU"/>
    <property type="match status" value="2"/>
</dbReference>
<dbReference type="PIRSF" id="PIRSF003107">
    <property type="entry name" value="PhoU"/>
    <property type="match status" value="1"/>
</dbReference>
<dbReference type="SUPFAM" id="SSF109755">
    <property type="entry name" value="PhoU-like"/>
    <property type="match status" value="1"/>
</dbReference>
<comment type="function">
    <text evidence="1">Plays a role in the regulation of phosphate uptake.</text>
</comment>
<comment type="subunit">
    <text evidence="1">Homodimer.</text>
</comment>
<comment type="subcellular location">
    <subcellularLocation>
        <location evidence="1">Cytoplasm</location>
    </subcellularLocation>
</comment>
<comment type="similarity">
    <text evidence="2">Belongs to the PhoU family.</text>
</comment>
<evidence type="ECO:0000250" key="1"/>
<evidence type="ECO:0000305" key="2"/>
<name>PHOU1_METTH</name>
<reference key="1">
    <citation type="journal article" date="1997" name="J. Bacteriol.">
        <title>Complete genome sequence of Methanobacterium thermoautotrophicum deltaH: functional analysis and comparative genomics.</title>
        <authorList>
            <person name="Smith D.R."/>
            <person name="Doucette-Stamm L.A."/>
            <person name="Deloughery C."/>
            <person name="Lee H.-M."/>
            <person name="Dubois J."/>
            <person name="Aldredge T."/>
            <person name="Bashirzadeh R."/>
            <person name="Blakely D."/>
            <person name="Cook R."/>
            <person name="Gilbert K."/>
            <person name="Harrison D."/>
            <person name="Hoang L."/>
            <person name="Keagle P."/>
            <person name="Lumm W."/>
            <person name="Pothier B."/>
            <person name="Qiu D."/>
            <person name="Spadafora R."/>
            <person name="Vicare R."/>
            <person name="Wang Y."/>
            <person name="Wierzbowski J."/>
            <person name="Gibson R."/>
            <person name="Jiwani N."/>
            <person name="Caruso A."/>
            <person name="Bush D."/>
            <person name="Safer H."/>
            <person name="Patwell D."/>
            <person name="Prabhakar S."/>
            <person name="McDougall S."/>
            <person name="Shimer G."/>
            <person name="Goyal A."/>
            <person name="Pietrovski S."/>
            <person name="Church G.M."/>
            <person name="Daniels C.J."/>
            <person name="Mao J.-I."/>
            <person name="Rice P."/>
            <person name="Noelling J."/>
            <person name="Reeve J.N."/>
        </authorList>
    </citation>
    <scope>NUCLEOTIDE SEQUENCE [LARGE SCALE GENOMIC DNA]</scope>
    <source>
        <strain>ATCC 29096 / DSM 1053 / JCM 10044 / NBRC 100330 / Delta H</strain>
    </source>
</reference>
<sequence length="219" mass="25642">MEKKYPRILFRKRLKDLRKDMEEVSQKTLKTHKLAVDLLMEYDEEKKEKVIKNSRAIDDMVFNLERKAISLIAAEQPVAGDLRFIEACIKVGSHLKRIGYLAANIAEAAEKLKDEEIPRRPLEDLKHMSDFVQMMLSKGIYAFLDQNMEMARELRHDDDKVDDLFDQTLEHVTRSMFEDKESISYLVNLLFIARFLERVGDRAVSIADRTIFMITCEKP</sequence>
<organism>
    <name type="scientific">Methanothermobacter thermautotrophicus (strain ATCC 29096 / DSM 1053 / JCM 10044 / NBRC 100330 / Delta H)</name>
    <name type="common">Methanobacterium thermoautotrophicum</name>
    <dbReference type="NCBI Taxonomy" id="187420"/>
    <lineage>
        <taxon>Archaea</taxon>
        <taxon>Methanobacteriati</taxon>
        <taxon>Methanobacteriota</taxon>
        <taxon>Methanomada group</taxon>
        <taxon>Methanobacteria</taxon>
        <taxon>Methanobacteriales</taxon>
        <taxon>Methanobacteriaceae</taxon>
        <taxon>Methanothermobacter</taxon>
    </lineage>
</organism>
<feature type="chain" id="PRO_0000155189" description="Phosphate-specific transport system accessory protein PhoU homolog 1">
    <location>
        <begin position="1"/>
        <end position="219"/>
    </location>
</feature>
<gene>
    <name type="ordered locus">MTH_1734</name>
</gene>
<accession>O27767</accession>
<protein>
    <recommendedName>
        <fullName>Phosphate-specific transport system accessory protein PhoU homolog 1</fullName>
        <shortName>Pst system accessory protein PhoU 1 homolog</shortName>
    </recommendedName>
</protein>
<proteinExistence type="inferred from homology"/>